<comment type="function">
    <text evidence="1">Transcription factor that may transactivate seed storage protein genes in developing seeds.</text>
</comment>
<comment type="subcellular location">
    <subcellularLocation>
        <location evidence="2">Nucleus</location>
    </subcellularLocation>
</comment>
<comment type="alternative products">
    <event type="alternative splicing"/>
    <isoform>
        <id>Q9SXG8-1</id>
        <name>1</name>
        <sequence type="displayed"/>
    </isoform>
    <isoform>
        <id>Q9SXG8-2</id>
        <name>2</name>
        <sequence type="described" ref="VSP_059043"/>
    </isoform>
</comment>
<comment type="developmental stage">
    <text evidence="4">Expressed at low level in germinating seeds 3 to 5 days after imbibition.</text>
</comment>
<comment type="sequence caution" evidence="6">
    <conflict type="erroneous gene model prediction">
        <sequence resource="EMBL-CDS" id="BAH92781"/>
    </conflict>
</comment>
<comment type="sequence caution" evidence="6">
    <conflict type="erroneous initiation">
        <sequence resource="EMBL-CDS" id="CAE02073"/>
    </conflict>
    <text>Truncated N-terminus.</text>
</comment>
<dbReference type="EMBL" id="AB028129">
    <property type="protein sequence ID" value="BAA78572.1"/>
    <property type="molecule type" value="mRNA"/>
</dbReference>
<dbReference type="EMBL" id="AL662954">
    <property type="protein sequence ID" value="CAE02073.2"/>
    <property type="status" value="ALT_INIT"/>
    <property type="molecule type" value="Genomic_DNA"/>
</dbReference>
<dbReference type="EMBL" id="AP008210">
    <property type="protein sequence ID" value="BAH92781.1"/>
    <property type="status" value="ALT_SEQ"/>
    <property type="molecule type" value="Genomic_DNA"/>
</dbReference>
<dbReference type="EMBL" id="AP014960">
    <property type="protein sequence ID" value="BAS90544.1"/>
    <property type="molecule type" value="Genomic_DNA"/>
</dbReference>
<dbReference type="EMBL" id="GQ183537">
    <property type="protein sequence ID" value="ACT31347.1"/>
    <property type="molecule type" value="mRNA"/>
</dbReference>
<dbReference type="RefSeq" id="XP_015637008.1">
    <property type="nucleotide sequence ID" value="XM_015781522.1"/>
</dbReference>
<dbReference type="RefSeq" id="XP_015637009.1">
    <molecule id="Q9SXG8-2"/>
    <property type="nucleotide sequence ID" value="XM_015781523.1"/>
</dbReference>
<dbReference type="FunCoup" id="Q9SXG8">
    <property type="interactions" value="2807"/>
</dbReference>
<dbReference type="IntAct" id="Q9SXG8">
    <property type="interactions" value="4"/>
</dbReference>
<dbReference type="STRING" id="39947.Q9SXG8"/>
<dbReference type="PaxDb" id="39947-Q9SXG8"/>
<dbReference type="GeneID" id="9267486"/>
<dbReference type="KEGG" id="dosa:Os04g0567800"/>
<dbReference type="eggNOG" id="ENOG502QPN9">
    <property type="taxonomic scope" value="Eukaryota"/>
</dbReference>
<dbReference type="HOGENOM" id="CLU_036438_5_1_1"/>
<dbReference type="InParanoid" id="Q9SXG8"/>
<dbReference type="OMA" id="DHGKEQQ"/>
<dbReference type="OrthoDB" id="1927254at2759"/>
<dbReference type="Proteomes" id="UP000000763">
    <property type="component" value="Chromosome 4"/>
</dbReference>
<dbReference type="Proteomes" id="UP000059680">
    <property type="component" value="Chromosome 4"/>
</dbReference>
<dbReference type="GO" id="GO:0005634">
    <property type="term" value="C:nucleus"/>
    <property type="evidence" value="ECO:0007669"/>
    <property type="project" value="UniProtKB-SubCell"/>
</dbReference>
<dbReference type="GO" id="GO:0003677">
    <property type="term" value="F:DNA binding"/>
    <property type="evidence" value="ECO:0007669"/>
    <property type="project" value="UniProtKB-KW"/>
</dbReference>
<dbReference type="GO" id="GO:0003700">
    <property type="term" value="F:DNA-binding transcription factor activity"/>
    <property type="evidence" value="ECO:0007669"/>
    <property type="project" value="InterPro"/>
</dbReference>
<dbReference type="GO" id="GO:0008270">
    <property type="term" value="F:zinc ion binding"/>
    <property type="evidence" value="ECO:0007669"/>
    <property type="project" value="UniProtKB-KW"/>
</dbReference>
<dbReference type="InterPro" id="IPR045174">
    <property type="entry name" value="Dof"/>
</dbReference>
<dbReference type="InterPro" id="IPR003851">
    <property type="entry name" value="Znf_Dof"/>
</dbReference>
<dbReference type="PANTHER" id="PTHR31992">
    <property type="entry name" value="DOF ZINC FINGER PROTEIN DOF1.4-RELATED"/>
    <property type="match status" value="1"/>
</dbReference>
<dbReference type="PANTHER" id="PTHR31992:SF285">
    <property type="entry name" value="DOF ZINC FINGER PROTEIN DOF4.6"/>
    <property type="match status" value="1"/>
</dbReference>
<dbReference type="Pfam" id="PF02701">
    <property type="entry name" value="Zn_ribbon_Dof"/>
    <property type="match status" value="1"/>
</dbReference>
<dbReference type="PROSITE" id="PS01361">
    <property type="entry name" value="ZF_DOF_1"/>
    <property type="match status" value="1"/>
</dbReference>
<dbReference type="PROSITE" id="PS50884">
    <property type="entry name" value="ZF_DOF_2"/>
    <property type="match status" value="1"/>
</dbReference>
<proteinExistence type="evidence at transcript level"/>
<evidence type="ECO:0000250" key="1">
    <source>
        <dbReference type="UniProtKB" id="Q6K537"/>
    </source>
</evidence>
<evidence type="ECO:0000255" key="2">
    <source>
        <dbReference type="PROSITE-ProRule" id="PRU00071"/>
    </source>
</evidence>
<evidence type="ECO:0000256" key="3">
    <source>
        <dbReference type="SAM" id="MobiDB-lite"/>
    </source>
</evidence>
<evidence type="ECO:0000269" key="4">
    <source>
    </source>
</evidence>
<evidence type="ECO:0000303" key="5">
    <source ref="1"/>
</evidence>
<evidence type="ECO:0000305" key="6"/>
<evidence type="ECO:0000312" key="7">
    <source>
        <dbReference type="EMBL" id="BAS90544.1"/>
    </source>
</evidence>
<evidence type="ECO:0000312" key="8">
    <source>
        <dbReference type="EMBL" id="CAE02073.2"/>
    </source>
</evidence>
<name>DOF1_ORYSJ</name>
<accession>Q9SXG8</accession>
<accession>A0A0P0WDP6</accession>
<accession>C7DQE1</accession>
<accession>C7J0X2</accession>
<accession>Q7XS99</accession>
<keyword id="KW-0025">Alternative splicing</keyword>
<keyword id="KW-0238">DNA-binding</keyword>
<keyword id="KW-0479">Metal-binding</keyword>
<keyword id="KW-0539">Nucleus</keyword>
<keyword id="KW-1185">Reference proteome</keyword>
<keyword id="KW-0804">Transcription</keyword>
<keyword id="KW-0805">Transcription regulation</keyword>
<keyword id="KW-0862">Zinc</keyword>
<keyword id="KW-0863">Zinc-finger</keyword>
<organism>
    <name type="scientific">Oryza sativa subsp. japonica</name>
    <name type="common">Rice</name>
    <dbReference type="NCBI Taxonomy" id="39947"/>
    <lineage>
        <taxon>Eukaryota</taxon>
        <taxon>Viridiplantae</taxon>
        <taxon>Streptophyta</taxon>
        <taxon>Embryophyta</taxon>
        <taxon>Tracheophyta</taxon>
        <taxon>Spermatophyta</taxon>
        <taxon>Magnoliopsida</taxon>
        <taxon>Liliopsida</taxon>
        <taxon>Poales</taxon>
        <taxon>Poaceae</taxon>
        <taxon>BOP clade</taxon>
        <taxon>Oryzoideae</taxon>
        <taxon>Oryzeae</taxon>
        <taxon>Oryzinae</taxon>
        <taxon>Oryza</taxon>
        <taxon>Oryza sativa</taxon>
    </lineage>
</organism>
<protein>
    <recommendedName>
        <fullName evidence="6">Dof zinc finger protein 1</fullName>
        <shortName evidence="5">OsDof1</shortName>
    </recommendedName>
</protein>
<gene>
    <name evidence="5" type="primary">DOF1</name>
    <name evidence="7" type="ordered locus">Os04g0567800</name>
    <name evidence="6" type="ordered locus">LOC_Os04g47990</name>
    <name evidence="8" type="ORF">OSJNBa0005N02.10</name>
</gene>
<sequence>MDAAHWHQGLGLVKPMEEMLMAANAAAGANPNPAATAPSSVTGGALRGGGGGGAPPVAGGAGAGSTERRARPQKEKALNCPRCNSTNTKFCYYNNYSLQQPRYFCKTCRRYWTEGGSLRNVPVGGGSRKNKRSSSSAASASPASASTANSVVTSASMSMSMASTGGGASKNPKLVHEGAQDLNLAFPHHGGLQAPGEFPAFPSLESSSVCNPGGPMGTNGRGGGALSAMELLRSTGCYMPLQVPMQMPAEYATPGFALGEFRAPPPPPQSSQSLLGFSLDAHGSVGGPSAAGFGSSAGLQGVPESTGRLLFPFEDLKPTVSSGTGGGGASGGGAGVDGGHQFDHGKEQQAGGGGGGPGGHDTPGFWNGMIGGGSGTSW</sequence>
<reference key="1">
    <citation type="online journal article" date="1999" name="Plant Gene Register">
        <title>Molecular analysis of rice cDNAs encoding Dof proteins in germinated aleurone cells.</title>
        <authorList>
            <person name="Washio K."/>
        </authorList>
        <locator>PGR99-107</locator>
    </citation>
    <scope>NUCLEOTIDE SEQUENCE [MRNA]</scope>
    <source>
        <strain>cv. Yukihikari</strain>
        <tissue>Aleurone</tissue>
    </source>
</reference>
<reference key="2">
    <citation type="journal article" date="2002" name="Nature">
        <title>Sequence and analysis of rice chromosome 4.</title>
        <authorList>
            <person name="Feng Q."/>
            <person name="Zhang Y."/>
            <person name="Hao P."/>
            <person name="Wang S."/>
            <person name="Fu G."/>
            <person name="Huang Y."/>
            <person name="Li Y."/>
            <person name="Zhu J."/>
            <person name="Liu Y."/>
            <person name="Hu X."/>
            <person name="Jia P."/>
            <person name="Zhang Y."/>
            <person name="Zhao Q."/>
            <person name="Ying K."/>
            <person name="Yu S."/>
            <person name="Tang Y."/>
            <person name="Weng Q."/>
            <person name="Zhang L."/>
            <person name="Lu Y."/>
            <person name="Mu J."/>
            <person name="Lu Y."/>
            <person name="Zhang L.S."/>
            <person name="Yu Z."/>
            <person name="Fan D."/>
            <person name="Liu X."/>
            <person name="Lu T."/>
            <person name="Li C."/>
            <person name="Wu Y."/>
            <person name="Sun T."/>
            <person name="Lei H."/>
            <person name="Li T."/>
            <person name="Hu H."/>
            <person name="Guan J."/>
            <person name="Wu M."/>
            <person name="Zhang R."/>
            <person name="Zhou B."/>
            <person name="Chen Z."/>
            <person name="Chen L."/>
            <person name="Jin Z."/>
            <person name="Wang R."/>
            <person name="Yin H."/>
            <person name="Cai Z."/>
            <person name="Ren S."/>
            <person name="Lv G."/>
            <person name="Gu W."/>
            <person name="Zhu G."/>
            <person name="Tu Y."/>
            <person name="Jia J."/>
            <person name="Zhang Y."/>
            <person name="Chen J."/>
            <person name="Kang H."/>
            <person name="Chen X."/>
            <person name="Shao C."/>
            <person name="Sun Y."/>
            <person name="Hu Q."/>
            <person name="Zhang X."/>
            <person name="Zhang W."/>
            <person name="Wang L."/>
            <person name="Ding C."/>
            <person name="Sheng H."/>
            <person name="Gu J."/>
            <person name="Chen S."/>
            <person name="Ni L."/>
            <person name="Zhu F."/>
            <person name="Chen W."/>
            <person name="Lan L."/>
            <person name="Lai Y."/>
            <person name="Cheng Z."/>
            <person name="Gu M."/>
            <person name="Jiang J."/>
            <person name="Li J."/>
            <person name="Hong G."/>
            <person name="Xue Y."/>
            <person name="Han B."/>
        </authorList>
    </citation>
    <scope>NUCLEOTIDE SEQUENCE [LARGE SCALE GENOMIC DNA]</scope>
    <source>
        <strain>cv. Nipponbare</strain>
    </source>
</reference>
<reference key="3">
    <citation type="journal article" date="2005" name="Nature">
        <title>The map-based sequence of the rice genome.</title>
        <authorList>
            <consortium name="International rice genome sequencing project (IRGSP)"/>
        </authorList>
    </citation>
    <scope>NUCLEOTIDE SEQUENCE [LARGE SCALE GENOMIC DNA]</scope>
    <source>
        <strain>cv. Nipponbare</strain>
    </source>
</reference>
<reference key="4">
    <citation type="journal article" date="2008" name="Nucleic Acids Res.">
        <title>The rice annotation project database (RAP-DB): 2008 update.</title>
        <authorList>
            <consortium name="The rice annotation project (RAP)"/>
        </authorList>
    </citation>
    <scope>GENOME REANNOTATION</scope>
    <source>
        <strain>cv. Nipponbare</strain>
    </source>
</reference>
<reference key="5">
    <citation type="journal article" date="2013" name="Rice">
        <title>Improvement of the Oryza sativa Nipponbare reference genome using next generation sequence and optical map data.</title>
        <authorList>
            <person name="Kawahara Y."/>
            <person name="de la Bastide M."/>
            <person name="Hamilton J.P."/>
            <person name="Kanamori H."/>
            <person name="McCombie W.R."/>
            <person name="Ouyang S."/>
            <person name="Schwartz D.C."/>
            <person name="Tanaka T."/>
            <person name="Wu J."/>
            <person name="Zhou S."/>
            <person name="Childs K.L."/>
            <person name="Davidson R.M."/>
            <person name="Lin H."/>
            <person name="Quesada-Ocampo L."/>
            <person name="Vaillancourt B."/>
            <person name="Sakai H."/>
            <person name="Lee S.S."/>
            <person name="Kim J."/>
            <person name="Numa H."/>
            <person name="Itoh T."/>
            <person name="Buell C.R."/>
            <person name="Matsumoto T."/>
        </authorList>
    </citation>
    <scope>GENOME REANNOTATION</scope>
    <source>
        <strain>cv. Nipponbare</strain>
    </source>
</reference>
<reference key="6">
    <citation type="submission" date="2009-05" db="EMBL/GenBank/DDBJ databases">
        <title>Oryza sativa japonica group Dof-type zinc finger protein 10 mRNA, partial cds.</title>
        <authorList>
            <person name="Gaur V.S."/>
            <person name="Singh U.S."/>
            <person name="Singh V.K."/>
            <person name="Kumar A."/>
        </authorList>
    </citation>
    <scope>NUCLEOTIDE SEQUENCE [MRNA] OF 267-366</scope>
    <source>
        <strain>cv. Nipponbare</strain>
    </source>
</reference>
<reference key="7">
    <citation type="journal article" date="2001" name="Biochim. Biophys. Acta">
        <title>Identification of Dof proteins with implication in the gibberellin-regulated expression of a peptidase gene following the germination of rice grains.</title>
        <authorList>
            <person name="Washio K."/>
        </authorList>
    </citation>
    <scope>DEVELOPMENTAL STAGE</scope>
</reference>
<feature type="chain" id="PRO_0000441227" description="Dof zinc finger protein 1">
    <location>
        <begin position="1"/>
        <end position="378"/>
    </location>
</feature>
<feature type="zinc finger region" description="Dof-type" evidence="2">
    <location>
        <begin position="78"/>
        <end position="132"/>
    </location>
</feature>
<feature type="region of interest" description="Disordered" evidence="3">
    <location>
        <begin position="28"/>
        <end position="79"/>
    </location>
</feature>
<feature type="region of interest" description="Disordered" evidence="3">
    <location>
        <begin position="116"/>
        <end position="148"/>
    </location>
</feature>
<feature type="region of interest" description="Disordered" evidence="3">
    <location>
        <begin position="203"/>
        <end position="222"/>
    </location>
</feature>
<feature type="region of interest" description="Disordered" evidence="3">
    <location>
        <begin position="316"/>
        <end position="378"/>
    </location>
</feature>
<feature type="compositionally biased region" description="Low complexity" evidence="3">
    <location>
        <begin position="28"/>
        <end position="38"/>
    </location>
</feature>
<feature type="compositionally biased region" description="Gly residues" evidence="3">
    <location>
        <begin position="45"/>
        <end position="63"/>
    </location>
</feature>
<feature type="compositionally biased region" description="Basic and acidic residues" evidence="3">
    <location>
        <begin position="66"/>
        <end position="77"/>
    </location>
</feature>
<feature type="compositionally biased region" description="Low complexity" evidence="3">
    <location>
        <begin position="133"/>
        <end position="148"/>
    </location>
</feature>
<feature type="compositionally biased region" description="Gly residues" evidence="3">
    <location>
        <begin position="323"/>
        <end position="338"/>
    </location>
</feature>
<feature type="compositionally biased region" description="Gly residues" evidence="3">
    <location>
        <begin position="350"/>
        <end position="361"/>
    </location>
</feature>
<feature type="compositionally biased region" description="Gly residues" evidence="3">
    <location>
        <begin position="369"/>
        <end position="378"/>
    </location>
</feature>
<feature type="binding site" evidence="2">
    <location>
        <position position="80"/>
    </location>
    <ligand>
        <name>Zn(2+)</name>
        <dbReference type="ChEBI" id="CHEBI:29105"/>
    </ligand>
</feature>
<feature type="binding site" evidence="2">
    <location>
        <position position="83"/>
    </location>
    <ligand>
        <name>Zn(2+)</name>
        <dbReference type="ChEBI" id="CHEBI:29105"/>
    </ligand>
</feature>
<feature type="binding site" evidence="2">
    <location>
        <position position="105"/>
    </location>
    <ligand>
        <name>Zn(2+)</name>
        <dbReference type="ChEBI" id="CHEBI:29105"/>
    </ligand>
</feature>
<feature type="binding site" evidence="2">
    <location>
        <position position="108"/>
    </location>
    <ligand>
        <name>Zn(2+)</name>
        <dbReference type="ChEBI" id="CHEBI:29105"/>
    </ligand>
</feature>
<feature type="splice variant" id="VSP_059043" description="In isoform 2.">
    <location>
        <begin position="1"/>
        <end position="15"/>
    </location>
</feature>